<dbReference type="EMBL" id="CP000157">
    <property type="protein sequence ID" value="ABC62798.1"/>
    <property type="molecule type" value="Genomic_DNA"/>
</dbReference>
<dbReference type="RefSeq" id="WP_011413674.1">
    <property type="nucleotide sequence ID" value="NC_007722.1"/>
</dbReference>
<dbReference type="SMR" id="Q2NBZ3"/>
<dbReference type="STRING" id="314225.ELI_03530"/>
<dbReference type="KEGG" id="eli:ELI_03530"/>
<dbReference type="eggNOG" id="COG0184">
    <property type="taxonomic scope" value="Bacteria"/>
</dbReference>
<dbReference type="HOGENOM" id="CLU_148518_0_0_5"/>
<dbReference type="OrthoDB" id="9799262at2"/>
<dbReference type="Proteomes" id="UP000008808">
    <property type="component" value="Chromosome"/>
</dbReference>
<dbReference type="GO" id="GO:0022627">
    <property type="term" value="C:cytosolic small ribosomal subunit"/>
    <property type="evidence" value="ECO:0007669"/>
    <property type="project" value="TreeGrafter"/>
</dbReference>
<dbReference type="GO" id="GO:0019843">
    <property type="term" value="F:rRNA binding"/>
    <property type="evidence" value="ECO:0007669"/>
    <property type="project" value="UniProtKB-UniRule"/>
</dbReference>
<dbReference type="GO" id="GO:0003735">
    <property type="term" value="F:structural constituent of ribosome"/>
    <property type="evidence" value="ECO:0007669"/>
    <property type="project" value="InterPro"/>
</dbReference>
<dbReference type="GO" id="GO:0006412">
    <property type="term" value="P:translation"/>
    <property type="evidence" value="ECO:0007669"/>
    <property type="project" value="UniProtKB-UniRule"/>
</dbReference>
<dbReference type="CDD" id="cd00353">
    <property type="entry name" value="Ribosomal_S15p_S13e"/>
    <property type="match status" value="1"/>
</dbReference>
<dbReference type="FunFam" id="1.10.287.10:FF:000002">
    <property type="entry name" value="30S ribosomal protein S15"/>
    <property type="match status" value="1"/>
</dbReference>
<dbReference type="Gene3D" id="6.10.250.3130">
    <property type="match status" value="1"/>
</dbReference>
<dbReference type="Gene3D" id="1.10.287.10">
    <property type="entry name" value="S15/NS1, RNA-binding"/>
    <property type="match status" value="1"/>
</dbReference>
<dbReference type="HAMAP" id="MF_01343_B">
    <property type="entry name" value="Ribosomal_uS15_B"/>
    <property type="match status" value="1"/>
</dbReference>
<dbReference type="InterPro" id="IPR000589">
    <property type="entry name" value="Ribosomal_uS15"/>
</dbReference>
<dbReference type="InterPro" id="IPR005290">
    <property type="entry name" value="Ribosomal_uS15_bac-type"/>
</dbReference>
<dbReference type="InterPro" id="IPR009068">
    <property type="entry name" value="uS15_NS1_RNA-bd_sf"/>
</dbReference>
<dbReference type="NCBIfam" id="TIGR00952">
    <property type="entry name" value="S15_bact"/>
    <property type="match status" value="1"/>
</dbReference>
<dbReference type="PANTHER" id="PTHR23321">
    <property type="entry name" value="RIBOSOMAL PROTEIN S15, BACTERIAL AND ORGANELLAR"/>
    <property type="match status" value="1"/>
</dbReference>
<dbReference type="PANTHER" id="PTHR23321:SF26">
    <property type="entry name" value="SMALL RIBOSOMAL SUBUNIT PROTEIN US15M"/>
    <property type="match status" value="1"/>
</dbReference>
<dbReference type="Pfam" id="PF00312">
    <property type="entry name" value="Ribosomal_S15"/>
    <property type="match status" value="1"/>
</dbReference>
<dbReference type="SMART" id="SM01387">
    <property type="entry name" value="Ribosomal_S15"/>
    <property type="match status" value="1"/>
</dbReference>
<dbReference type="SUPFAM" id="SSF47060">
    <property type="entry name" value="S15/NS1 RNA-binding domain"/>
    <property type="match status" value="1"/>
</dbReference>
<dbReference type="PROSITE" id="PS00362">
    <property type="entry name" value="RIBOSOMAL_S15"/>
    <property type="match status" value="1"/>
</dbReference>
<comment type="function">
    <text evidence="1">One of the primary rRNA binding proteins, it binds directly to 16S rRNA where it helps nucleate assembly of the platform of the 30S subunit by binding and bridging several RNA helices of the 16S rRNA.</text>
</comment>
<comment type="function">
    <text evidence="1">Forms an intersubunit bridge (bridge B4) with the 23S rRNA of the 50S subunit in the ribosome.</text>
</comment>
<comment type="subunit">
    <text evidence="1">Part of the 30S ribosomal subunit. Forms a bridge to the 50S subunit in the 70S ribosome, contacting the 23S rRNA.</text>
</comment>
<comment type="similarity">
    <text evidence="1">Belongs to the universal ribosomal protein uS15 family.</text>
</comment>
<evidence type="ECO:0000255" key="1">
    <source>
        <dbReference type="HAMAP-Rule" id="MF_01343"/>
    </source>
</evidence>
<evidence type="ECO:0000256" key="2">
    <source>
        <dbReference type="SAM" id="MobiDB-lite"/>
    </source>
</evidence>
<evidence type="ECO:0000305" key="3"/>
<proteinExistence type="inferred from homology"/>
<protein>
    <recommendedName>
        <fullName evidence="1">Small ribosomal subunit protein uS15</fullName>
    </recommendedName>
    <alternativeName>
        <fullName evidence="3">30S ribosomal protein S15</fullName>
    </alternativeName>
</protein>
<sequence>MSVDAETKTKIIKDNARDKNDTGSPEVQVAILTTRIKNLTEHFKDHHKDNHSRRGLLQMVNKRRSLLAYLKKKDVERYNALIQKLGLRK</sequence>
<organism>
    <name type="scientific">Erythrobacter litoralis (strain HTCC2594)</name>
    <dbReference type="NCBI Taxonomy" id="314225"/>
    <lineage>
        <taxon>Bacteria</taxon>
        <taxon>Pseudomonadati</taxon>
        <taxon>Pseudomonadota</taxon>
        <taxon>Alphaproteobacteria</taxon>
        <taxon>Sphingomonadales</taxon>
        <taxon>Erythrobacteraceae</taxon>
        <taxon>Erythrobacter/Porphyrobacter group</taxon>
        <taxon>Erythrobacter</taxon>
    </lineage>
</organism>
<keyword id="KW-1185">Reference proteome</keyword>
<keyword id="KW-0687">Ribonucleoprotein</keyword>
<keyword id="KW-0689">Ribosomal protein</keyword>
<keyword id="KW-0694">RNA-binding</keyword>
<keyword id="KW-0699">rRNA-binding</keyword>
<accession>Q2NBZ3</accession>
<feature type="chain" id="PRO_1000054780" description="Small ribosomal subunit protein uS15">
    <location>
        <begin position="1"/>
        <end position="89"/>
    </location>
</feature>
<feature type="region of interest" description="Disordered" evidence="2">
    <location>
        <begin position="1"/>
        <end position="26"/>
    </location>
</feature>
<feature type="compositionally biased region" description="Basic and acidic residues" evidence="2">
    <location>
        <begin position="1"/>
        <end position="21"/>
    </location>
</feature>
<reference key="1">
    <citation type="journal article" date="2009" name="J. Bacteriol.">
        <title>Complete genome sequence of Erythrobacter litoralis HTCC2594.</title>
        <authorList>
            <person name="Oh H.M."/>
            <person name="Giovannoni S.J."/>
            <person name="Ferriera S."/>
            <person name="Johnson J."/>
            <person name="Cho J.C."/>
        </authorList>
    </citation>
    <scope>NUCLEOTIDE SEQUENCE [LARGE SCALE GENOMIC DNA]</scope>
    <source>
        <strain>HTCC2594</strain>
    </source>
</reference>
<name>RS15_ERYLH</name>
<gene>
    <name evidence="1" type="primary">rpsO</name>
    <name type="ordered locus">ELI_03530</name>
</gene>